<reference key="1">
    <citation type="journal article" date="2005" name="Proc. Natl. Acad. Sci. U.S.A.">
        <title>The genome of Salinibacter ruber: convergence and gene exchange among hyperhalophilic bacteria and archaea.</title>
        <authorList>
            <person name="Mongodin E.F."/>
            <person name="Nelson K.E."/>
            <person name="Daugherty S."/>
            <person name="DeBoy R.T."/>
            <person name="Wister J."/>
            <person name="Khouri H."/>
            <person name="Weidman J."/>
            <person name="Walsh D.A."/>
            <person name="Papke R.T."/>
            <person name="Sanchez Perez G."/>
            <person name="Sharma A.K."/>
            <person name="Nesbo C.L."/>
            <person name="MacLeod D."/>
            <person name="Bapteste E."/>
            <person name="Doolittle W.F."/>
            <person name="Charlebois R.L."/>
            <person name="Legault B."/>
            <person name="Rodriguez-Valera F."/>
        </authorList>
    </citation>
    <scope>NUCLEOTIDE SEQUENCE [LARGE SCALE GENOMIC DNA]</scope>
    <source>
        <strain>DSM 13855 / CECT 5946 / M31</strain>
    </source>
</reference>
<feature type="chain" id="PRO_0000264842" description="DNA repair protein RecO">
    <location>
        <begin position="1"/>
        <end position="260"/>
    </location>
</feature>
<evidence type="ECO:0000255" key="1">
    <source>
        <dbReference type="HAMAP-Rule" id="MF_00201"/>
    </source>
</evidence>
<proteinExistence type="inferred from homology"/>
<keyword id="KW-0227">DNA damage</keyword>
<keyword id="KW-0233">DNA recombination</keyword>
<keyword id="KW-0234">DNA repair</keyword>
<keyword id="KW-1185">Reference proteome</keyword>
<protein>
    <recommendedName>
        <fullName evidence="1">DNA repair protein RecO</fullName>
    </recommendedName>
    <alternativeName>
        <fullName evidence="1">Recombination protein O</fullName>
    </alternativeName>
</protein>
<organism>
    <name type="scientific">Salinibacter ruber (strain DSM 13855 / M31)</name>
    <dbReference type="NCBI Taxonomy" id="309807"/>
    <lineage>
        <taxon>Bacteria</taxon>
        <taxon>Pseudomonadati</taxon>
        <taxon>Rhodothermota</taxon>
        <taxon>Rhodothermia</taxon>
        <taxon>Rhodothermales</taxon>
        <taxon>Salinibacteraceae</taxon>
        <taxon>Salinibacter</taxon>
    </lineage>
</organism>
<accession>Q2S3C9</accession>
<name>RECO_SALRD</name>
<dbReference type="EMBL" id="CP000159">
    <property type="protein sequence ID" value="ABC45742.1"/>
    <property type="molecule type" value="Genomic_DNA"/>
</dbReference>
<dbReference type="RefSeq" id="WP_011403930.1">
    <property type="nucleotide sequence ID" value="NC_007677.1"/>
</dbReference>
<dbReference type="RefSeq" id="YP_445302.1">
    <property type="nucleotide sequence ID" value="NC_007677.1"/>
</dbReference>
<dbReference type="SMR" id="Q2S3C9"/>
<dbReference type="STRING" id="309807.SRU_1176"/>
<dbReference type="EnsemblBacteria" id="ABC45742">
    <property type="protein sequence ID" value="ABC45742"/>
    <property type="gene ID" value="SRU_1176"/>
</dbReference>
<dbReference type="GeneID" id="83728087"/>
<dbReference type="KEGG" id="sru:SRU_1176"/>
<dbReference type="PATRIC" id="fig|309807.25.peg.1222"/>
<dbReference type="eggNOG" id="COG1381">
    <property type="taxonomic scope" value="Bacteria"/>
</dbReference>
<dbReference type="HOGENOM" id="CLU_066632_2_1_10"/>
<dbReference type="OrthoDB" id="9789152at2"/>
<dbReference type="Proteomes" id="UP000008674">
    <property type="component" value="Chromosome"/>
</dbReference>
<dbReference type="GO" id="GO:0043590">
    <property type="term" value="C:bacterial nucleoid"/>
    <property type="evidence" value="ECO:0007669"/>
    <property type="project" value="TreeGrafter"/>
</dbReference>
<dbReference type="GO" id="GO:0006310">
    <property type="term" value="P:DNA recombination"/>
    <property type="evidence" value="ECO:0007669"/>
    <property type="project" value="UniProtKB-UniRule"/>
</dbReference>
<dbReference type="GO" id="GO:0006302">
    <property type="term" value="P:double-strand break repair"/>
    <property type="evidence" value="ECO:0007669"/>
    <property type="project" value="TreeGrafter"/>
</dbReference>
<dbReference type="Gene3D" id="2.40.50.140">
    <property type="entry name" value="Nucleic acid-binding proteins"/>
    <property type="match status" value="1"/>
</dbReference>
<dbReference type="Gene3D" id="1.20.1440.120">
    <property type="entry name" value="Recombination protein O, C-terminal domain"/>
    <property type="match status" value="1"/>
</dbReference>
<dbReference type="HAMAP" id="MF_00201">
    <property type="entry name" value="RecO"/>
    <property type="match status" value="1"/>
</dbReference>
<dbReference type="InterPro" id="IPR037278">
    <property type="entry name" value="ARFGAP/RecO"/>
</dbReference>
<dbReference type="InterPro" id="IPR022572">
    <property type="entry name" value="DNA_rep/recomb_RecO_N"/>
</dbReference>
<dbReference type="InterPro" id="IPR012340">
    <property type="entry name" value="NA-bd_OB-fold"/>
</dbReference>
<dbReference type="InterPro" id="IPR003717">
    <property type="entry name" value="RecO"/>
</dbReference>
<dbReference type="InterPro" id="IPR042242">
    <property type="entry name" value="RecO_C"/>
</dbReference>
<dbReference type="NCBIfam" id="TIGR00613">
    <property type="entry name" value="reco"/>
    <property type="match status" value="1"/>
</dbReference>
<dbReference type="PANTHER" id="PTHR33991">
    <property type="entry name" value="DNA REPAIR PROTEIN RECO"/>
    <property type="match status" value="1"/>
</dbReference>
<dbReference type="PANTHER" id="PTHR33991:SF1">
    <property type="entry name" value="DNA REPAIR PROTEIN RECO"/>
    <property type="match status" value="1"/>
</dbReference>
<dbReference type="Pfam" id="PF02565">
    <property type="entry name" value="RecO_C"/>
    <property type="match status" value="1"/>
</dbReference>
<dbReference type="Pfam" id="PF11967">
    <property type="entry name" value="RecO_N"/>
    <property type="match status" value="1"/>
</dbReference>
<dbReference type="SUPFAM" id="SSF57863">
    <property type="entry name" value="ArfGap/RecO-like zinc finger"/>
    <property type="match status" value="1"/>
</dbReference>
<dbReference type="SUPFAM" id="SSF50249">
    <property type="entry name" value="Nucleic acid-binding proteins"/>
    <property type="match status" value="1"/>
</dbReference>
<gene>
    <name evidence="1" type="primary">recO</name>
    <name type="ordered locus">SRU_1176</name>
</gene>
<comment type="function">
    <text evidence="1">Involved in DNA repair and RecF pathway recombination.</text>
</comment>
<comment type="similarity">
    <text evidence="1">Belongs to the RecO family.</text>
</comment>
<sequence>MAQRSIVRTKAVVLRSIDYGETSQIVTLFTQEKGKLGVMAKGARRPKSSFGATLQPMAYTQVVFYHKPSRTLQTLSESSHVQSFHRLREKLPTITVGLRIVELVDALMEEEDPQPAAFALVVRALHRLNIAEARVSNLWPYVQLQLAQILGVAPAVDRTRVEAVTGDEGLLSLADGGVYPADGTPDQPKRASRAALRAYAVCARADLDTVMRLTMSPAVRREVEALVRDFLRYQFDDAYPDRSRSVIAQIEGAKPTDRAT</sequence>